<name>ENTP2_CHICK</name>
<protein>
    <recommendedName>
        <fullName>Ectonucleoside triphosphate diphosphohydrolase 2</fullName>
        <shortName>NTPDase 2</shortName>
        <ecNumber>3.6.1.-</ecNumber>
    </recommendedName>
    <alternativeName>
        <fullName>CD39 antigen-like 1</fullName>
    </alternativeName>
    <alternativeName>
        <fullName>Ecto-ATP diphosphohydrolase 2</fullName>
        <shortName>Ecto-ATPDase 2</shortName>
        <shortName>Ecto-ATPase 2</shortName>
    </alternativeName>
</protein>
<reference key="1">
    <citation type="journal article" date="1997" name="J. Biol. Chem.">
        <title>Complementary DNA cloning and sequencing of the chicken muscle ecto-ATPase. Homology with the lymphoid cell activation antigen CD39.</title>
        <authorList>
            <person name="Kirley T.L."/>
        </authorList>
    </citation>
    <scope>NUCLEOTIDE SEQUENCE [MRNA]</scope>
    <scope>PROTEIN SEQUENCE OF 2-22; 69-74; 84-91; 108; 121; 145-151; 155-177; 209-218; 252-259; 274-285; 338-353; 375-381; 384-390; 449-457 AND 460-480</scope>
    <source>
        <tissue>Gizzard</tissue>
        <tissue>Skeletal muscle</tissue>
    </source>
</reference>
<reference key="2">
    <citation type="journal article" date="1994" name="J. Biochem. Biophys. Methods">
        <title>Purification and characterization of the ecto-Mg-ATPase of chicken gizzard smooth muscle.</title>
        <authorList>
            <person name="Stout J.G."/>
            <person name="Kirley T.L."/>
        </authorList>
    </citation>
    <scope>PROTEIN SEQUENCE OF 2-13 AND 155-177</scope>
    <scope>CHARACTERIZATION</scope>
</reference>
<accession>P79784</accession>
<feature type="initiator methionine" description="Removed" evidence="4 5">
    <location>
        <position position="1"/>
    </location>
</feature>
<feature type="chain" id="PRO_0000209909" description="Ectonucleoside triphosphate diphosphohydrolase 2">
    <location>
        <begin position="2"/>
        <end position="495"/>
    </location>
</feature>
<feature type="topological domain" description="Cytoplasmic" evidence="3">
    <location>
        <begin position="2"/>
        <end position="4"/>
    </location>
</feature>
<feature type="transmembrane region" description="Helical" evidence="3">
    <location>
        <begin position="5"/>
        <end position="25"/>
    </location>
</feature>
<feature type="topological domain" description="Extracellular" evidence="3">
    <location>
        <begin position="26"/>
        <end position="465"/>
    </location>
</feature>
<feature type="transmembrane region" description="Helical" evidence="3">
    <location>
        <begin position="466"/>
        <end position="486"/>
    </location>
</feature>
<feature type="topological domain" description="Cytoplasmic" evidence="3">
    <location>
        <begin position="487"/>
        <end position="495"/>
    </location>
</feature>
<feature type="active site" description="Proton acceptor" evidence="2">
    <location>
        <position position="162"/>
    </location>
</feature>
<feature type="binding site" evidence="2">
    <location>
        <begin position="201"/>
        <end position="205"/>
    </location>
    <ligand>
        <name>ATP</name>
        <dbReference type="ChEBI" id="CHEBI:30616"/>
    </ligand>
</feature>
<feature type="glycosylation site" description="N-linked (GlcNAc...) asparagine" evidence="3">
    <location>
        <position position="62"/>
    </location>
</feature>
<feature type="glycosylation site" description="N-linked (GlcNAc...) asparagine" evidence="3">
    <location>
        <position position="297"/>
    </location>
</feature>
<feature type="glycosylation site" description="N-linked (GlcNAc...) asparagine" evidence="3">
    <location>
        <position position="418"/>
    </location>
</feature>
<feature type="glycosylation site" description="N-linked (GlcNAc...) asparagine" evidence="3">
    <location>
        <position position="444"/>
    </location>
</feature>
<feature type="disulfide bond" evidence="2">
    <location>
        <begin position="73"/>
        <end position="97"/>
    </location>
</feature>
<feature type="disulfide bond" evidence="2">
    <location>
        <begin position="239"/>
        <end position="286"/>
    </location>
</feature>
<feature type="disulfide bond" evidence="2">
    <location>
        <begin position="267"/>
        <end position="311"/>
    </location>
</feature>
<feature type="disulfide bond" evidence="2">
    <location>
        <begin position="324"/>
        <end position="329"/>
    </location>
</feature>
<feature type="disulfide bond" evidence="2">
    <location>
        <begin position="378"/>
        <end position="400"/>
    </location>
</feature>
<feature type="sequence conflict" description="In Ref. 2; AA sequence." evidence="6" ref="2">
    <original>L</original>
    <variation>LL</variation>
    <location>
        <position position="12"/>
    </location>
</feature>
<feature type="sequence conflict" description="In Ref. 2; AA sequence." evidence="6" ref="2">
    <original>ENF</original>
    <variation>GNK</variation>
    <location>
        <begin position="175"/>
        <end position="177"/>
    </location>
</feature>
<organism>
    <name type="scientific">Gallus gallus</name>
    <name type="common">Chicken</name>
    <dbReference type="NCBI Taxonomy" id="9031"/>
    <lineage>
        <taxon>Eukaryota</taxon>
        <taxon>Metazoa</taxon>
        <taxon>Chordata</taxon>
        <taxon>Craniata</taxon>
        <taxon>Vertebrata</taxon>
        <taxon>Euteleostomi</taxon>
        <taxon>Archelosauria</taxon>
        <taxon>Archosauria</taxon>
        <taxon>Dinosauria</taxon>
        <taxon>Saurischia</taxon>
        <taxon>Theropoda</taxon>
        <taxon>Coelurosauria</taxon>
        <taxon>Aves</taxon>
        <taxon>Neognathae</taxon>
        <taxon>Galloanserae</taxon>
        <taxon>Galliformes</taxon>
        <taxon>Phasianidae</taxon>
        <taxon>Phasianinae</taxon>
        <taxon>Gallus</taxon>
    </lineage>
</organism>
<proteinExistence type="evidence at protein level"/>
<keyword id="KW-0067">ATP-binding</keyword>
<keyword id="KW-0106">Calcium</keyword>
<keyword id="KW-0903">Direct protein sequencing</keyword>
<keyword id="KW-1015">Disulfide bond</keyword>
<keyword id="KW-0325">Glycoprotein</keyword>
<keyword id="KW-0378">Hydrolase</keyword>
<keyword id="KW-0460">Magnesium</keyword>
<keyword id="KW-0472">Membrane</keyword>
<keyword id="KW-0547">Nucleotide-binding</keyword>
<keyword id="KW-1185">Reference proteome</keyword>
<keyword id="KW-0812">Transmembrane</keyword>
<keyword id="KW-1133">Transmembrane helix</keyword>
<sequence>MARRAAAVLLLLALGCLLGILLLCLGSGDARGPPSFKYGIVLDAGSSHTAVFIYKWPADKENDTGVVSEHSMCDVEGPGISSYSSKPPAAGKSLEHCLSQAMRDVPKEKHADTPLYLGATAGMRLLTIADPPSQTCLSAVMATLKSYPFDFGGAKILSGEEEGVFGWITANYLLENFIKRGWLGEWIQSKKKTLGAMDFGGASTQITFETSDAIEDPKNEVMLKLYGQPYKVYTHSFLCYGRDQVLKRLLSKVLQAENYQETVANPCWPTGYRKSLSLSSIYDSPCTEKERPGLPLNTTVVVSGTGNGNLCAVHVNKLFDFTSCSFSHCSFDGVFQPEVSGNFIAFSAFFYTVDFIRTVMERPVHSPSDLKDAAETICATSWNELYQKAPRLEKRLPDYCATSTFVYLLITKGYNFNNRSFPSIAFQKKAGETSIGWALGYMLNLTNMIPAQEPASHRSMLYNYWVILILLFVITTLTALLTAVYLLRRSKSSTI</sequence>
<evidence type="ECO:0000250" key="1"/>
<evidence type="ECO:0000250" key="2">
    <source>
        <dbReference type="UniProtKB" id="O35795"/>
    </source>
</evidence>
<evidence type="ECO:0000255" key="3"/>
<evidence type="ECO:0000269" key="4">
    <source>
    </source>
</evidence>
<evidence type="ECO:0000269" key="5">
    <source>
    </source>
</evidence>
<evidence type="ECO:0000305" key="6"/>
<comment type="function">
    <text evidence="1">In the nervous system, could hydrolyze ATP and other nucleotides to regulate purinergic neurotransmission. Hydrolyzes ADP only to a marginal extent (By similarity).</text>
</comment>
<comment type="cofactor">
    <cofactor>
        <name>Ca(2+)</name>
        <dbReference type="ChEBI" id="CHEBI:29108"/>
    </cofactor>
    <cofactor>
        <name>Mg(2+)</name>
        <dbReference type="ChEBI" id="CHEBI:18420"/>
    </cofactor>
</comment>
<comment type="subcellular location">
    <subcellularLocation>
        <location evidence="6">Membrane</location>
        <topology evidence="6">Multi-pass membrane protein</topology>
    </subcellularLocation>
</comment>
<comment type="similarity">
    <text evidence="6">Belongs to the GDA1/CD39 NTPase family.</text>
</comment>
<gene>
    <name type="primary">ENTPD2</name>
    <name type="synonym">CD39L1</name>
</gene>
<dbReference type="EC" id="3.6.1.-"/>
<dbReference type="EMBL" id="U74467">
    <property type="protein sequence ID" value="AAC60071.1"/>
    <property type="molecule type" value="mRNA"/>
</dbReference>
<dbReference type="SMR" id="P79784"/>
<dbReference type="FunCoup" id="P79784">
    <property type="interactions" value="152"/>
</dbReference>
<dbReference type="STRING" id="9031.ENSGALP00000061737"/>
<dbReference type="GlyCosmos" id="P79784">
    <property type="glycosylation" value="4 sites, No reported glycans"/>
</dbReference>
<dbReference type="GlyGen" id="P79784">
    <property type="glycosylation" value="4 sites"/>
</dbReference>
<dbReference type="PaxDb" id="9031-ENSGALP00000014728"/>
<dbReference type="VEuPathDB" id="HostDB:geneid_395797"/>
<dbReference type="eggNOG" id="KOG1386">
    <property type="taxonomic scope" value="Eukaryota"/>
</dbReference>
<dbReference type="InParanoid" id="P79784"/>
<dbReference type="OrthoDB" id="6372431at2759"/>
<dbReference type="PhylomeDB" id="P79784"/>
<dbReference type="Proteomes" id="UP000000539">
    <property type="component" value="Unassembled WGS sequence"/>
</dbReference>
<dbReference type="GO" id="GO:0016020">
    <property type="term" value="C:membrane"/>
    <property type="evidence" value="ECO:0000314"/>
    <property type="project" value="AgBase"/>
</dbReference>
<dbReference type="GO" id="GO:0005886">
    <property type="term" value="C:plasma membrane"/>
    <property type="evidence" value="ECO:0000318"/>
    <property type="project" value="GO_Central"/>
</dbReference>
<dbReference type="GO" id="GO:0005524">
    <property type="term" value="F:ATP binding"/>
    <property type="evidence" value="ECO:0007669"/>
    <property type="project" value="UniProtKB-KW"/>
</dbReference>
<dbReference type="GO" id="GO:0004382">
    <property type="term" value="F:GDP phosphatase activity"/>
    <property type="evidence" value="ECO:0000318"/>
    <property type="project" value="GO_Central"/>
</dbReference>
<dbReference type="GO" id="GO:0017111">
    <property type="term" value="F:ribonucleoside triphosphate phosphatase activity"/>
    <property type="evidence" value="ECO:0000318"/>
    <property type="project" value="GO_Central"/>
</dbReference>
<dbReference type="GO" id="GO:0045134">
    <property type="term" value="F:UDP phosphatase activity"/>
    <property type="evidence" value="ECO:0000318"/>
    <property type="project" value="GO_Central"/>
</dbReference>
<dbReference type="GO" id="GO:0009134">
    <property type="term" value="P:nucleoside diphosphate catabolic process"/>
    <property type="evidence" value="ECO:0000318"/>
    <property type="project" value="GO_Central"/>
</dbReference>
<dbReference type="CDD" id="cd24111">
    <property type="entry name" value="ASKHA_NBD_NTPDase2"/>
    <property type="match status" value="1"/>
</dbReference>
<dbReference type="FunFam" id="3.30.420.150:FF:000002">
    <property type="entry name" value="Ectonucleoside triphosphate diphosphohydrolase 1"/>
    <property type="match status" value="1"/>
</dbReference>
<dbReference type="FunFam" id="3.30.420.40:FF:000068">
    <property type="entry name" value="Ectonucleoside triphosphate diphosphohydrolase 1"/>
    <property type="match status" value="1"/>
</dbReference>
<dbReference type="Gene3D" id="3.30.420.40">
    <property type="match status" value="1"/>
</dbReference>
<dbReference type="Gene3D" id="3.30.420.150">
    <property type="entry name" value="Exopolyphosphatase. Domain 2"/>
    <property type="match status" value="1"/>
</dbReference>
<dbReference type="InterPro" id="IPR000407">
    <property type="entry name" value="GDA1_CD39_NTPase"/>
</dbReference>
<dbReference type="PANTHER" id="PTHR11782">
    <property type="entry name" value="ADENOSINE/GUANOSINE DIPHOSPHATASE"/>
    <property type="match status" value="1"/>
</dbReference>
<dbReference type="PANTHER" id="PTHR11782:SF33">
    <property type="entry name" value="ECTONUCLEOSIDE TRIPHOSPHATE DIPHOSPHOHYDROLASE 2"/>
    <property type="match status" value="1"/>
</dbReference>
<dbReference type="Pfam" id="PF01150">
    <property type="entry name" value="GDA1_CD39"/>
    <property type="match status" value="1"/>
</dbReference>
<dbReference type="PROSITE" id="PS01238">
    <property type="entry name" value="GDA1_CD39_NTPASE"/>
    <property type="match status" value="1"/>
</dbReference>